<gene>
    <name type="primary">MAP70.2</name>
    <name type="ordered locus">Os02g0736100</name>
    <name type="ordered locus">LOC_Os02g50320</name>
    <name type="ORF">P0487D09.19-1</name>
</gene>
<sequence length="599" mass="66343">MADGGGGEEGSASALRGSARRRGAVQPAGLDADELLTLMHGSDPVKVELNRLENEVRDKDRELGDAHAEIKALRLSERAREKAVEELTAEYEKLDEKLKLTESLLESKNLELKKTNDEKKAAMAAQFAAEATLRRVHAAQKDDDMPPIEAILAPLEAELKLARQEIAKLQDDNRALDRLTKQKEAALLEAERTVEIALAKAAMVDDMQNKNQELMKQIEICQEENKILDRLHRQKVAEVEKLSQTVRELEEAVLAGGAAANAVRDYQRKVQEMNEERKILDRELARAKVTANRVAVVVANEWKDANDKVMPVKQWLEERRFLQGEMQQLRDKLAIAERTARSEAQLKEKYQLRLKVLEDGLRGPPSGSSRPTEGKSIGNGPSRRLSLGGADNMSKISPNGMLARRSPSFNSRSSLSTSSSLVIKHAKGTSRSFDGGTRSLDRGKVLGNGPHLLNRSTDAVRDCETTDDWKAANTEEKGSEATNSSSTDTVSGVLYDMLQKEVISLRKACHEKDQSLKDKDDAIEMLAKKVDTLTKAMEVEAKKMRREVAAMEKEVAAMRLDKDQENKAKRPGNFKGPGTTSQAPHGRNAPRGGLTRNLQ</sequence>
<evidence type="ECO:0000250" key="1"/>
<evidence type="ECO:0000255" key="2"/>
<evidence type="ECO:0000256" key="3">
    <source>
        <dbReference type="SAM" id="MobiDB-lite"/>
    </source>
</evidence>
<evidence type="ECO:0000305" key="4"/>
<proteinExistence type="evidence at transcript level"/>
<comment type="function">
    <text evidence="1">Plant-specific protein that interact with microtubules.</text>
</comment>
<comment type="subcellular location">
    <subcellularLocation>
        <location evidence="1">Cytoplasm</location>
        <location evidence="1">Cytoskeleton</location>
    </subcellularLocation>
    <text>Associated to microtubules.</text>
</comment>
<comment type="similarity">
    <text evidence="4">Belongs to the MAP70 family.</text>
</comment>
<feature type="chain" id="PRO_0000409463" description="Microtubule-associated protein 70-2">
    <location>
        <begin position="1"/>
        <end position="599"/>
    </location>
</feature>
<feature type="region of interest" description="Disordered" evidence="3">
    <location>
        <begin position="1"/>
        <end position="30"/>
    </location>
</feature>
<feature type="region of interest" description="Required for targeting to microtubules" evidence="1">
    <location>
        <begin position="227"/>
        <end position="460"/>
    </location>
</feature>
<feature type="region of interest" description="Disordered" evidence="3">
    <location>
        <begin position="357"/>
        <end position="453"/>
    </location>
</feature>
<feature type="region of interest" description="Disordered" evidence="3">
    <location>
        <begin position="557"/>
        <end position="599"/>
    </location>
</feature>
<feature type="coiled-coil region" evidence="2">
    <location>
        <begin position="43"/>
        <end position="349"/>
    </location>
</feature>
<feature type="coiled-coil region" evidence="2">
    <location>
        <begin position="533"/>
        <end position="570"/>
    </location>
</feature>
<feature type="compositionally biased region" description="Low complexity" evidence="3">
    <location>
        <begin position="404"/>
        <end position="420"/>
    </location>
</feature>
<feature type="compositionally biased region" description="Basic and acidic residues" evidence="3">
    <location>
        <begin position="557"/>
        <end position="568"/>
    </location>
</feature>
<accession>Q6Z746</accession>
<accession>A0A0P0VPE9</accession>
<reference key="1">
    <citation type="journal article" date="2005" name="Nature">
        <title>The map-based sequence of the rice genome.</title>
        <authorList>
            <consortium name="International rice genome sequencing project (IRGSP)"/>
        </authorList>
    </citation>
    <scope>NUCLEOTIDE SEQUENCE [LARGE SCALE GENOMIC DNA]</scope>
    <source>
        <strain>cv. Nipponbare</strain>
    </source>
</reference>
<reference key="2">
    <citation type="journal article" date="2008" name="Nucleic Acids Res.">
        <title>The rice annotation project database (RAP-DB): 2008 update.</title>
        <authorList>
            <consortium name="The rice annotation project (RAP)"/>
        </authorList>
    </citation>
    <scope>GENOME REANNOTATION</scope>
    <source>
        <strain>cv. Nipponbare</strain>
    </source>
</reference>
<reference key="3">
    <citation type="journal article" date="2013" name="Rice">
        <title>Improvement of the Oryza sativa Nipponbare reference genome using next generation sequence and optical map data.</title>
        <authorList>
            <person name="Kawahara Y."/>
            <person name="de la Bastide M."/>
            <person name="Hamilton J.P."/>
            <person name="Kanamori H."/>
            <person name="McCombie W.R."/>
            <person name="Ouyang S."/>
            <person name="Schwartz D.C."/>
            <person name="Tanaka T."/>
            <person name="Wu J."/>
            <person name="Zhou S."/>
            <person name="Childs K.L."/>
            <person name="Davidson R.M."/>
            <person name="Lin H."/>
            <person name="Quesada-Ocampo L."/>
            <person name="Vaillancourt B."/>
            <person name="Sakai H."/>
            <person name="Lee S.S."/>
            <person name="Kim J."/>
            <person name="Numa H."/>
            <person name="Itoh T."/>
            <person name="Buell C.R."/>
            <person name="Matsumoto T."/>
        </authorList>
    </citation>
    <scope>GENOME REANNOTATION</scope>
    <source>
        <strain>cv. Nipponbare</strain>
    </source>
</reference>
<reference key="4">
    <citation type="journal article" date="2003" name="Science">
        <title>Collection, mapping, and annotation of over 28,000 cDNA clones from japonica rice.</title>
        <authorList>
            <consortium name="The rice full-length cDNA consortium"/>
        </authorList>
    </citation>
    <scope>NUCLEOTIDE SEQUENCE [LARGE SCALE MRNA]</scope>
    <source>
        <strain>cv. Nipponbare</strain>
    </source>
</reference>
<name>MP702_ORYSJ</name>
<protein>
    <recommendedName>
        <fullName>Microtubule-associated protein 70-2</fullName>
        <shortName>AtMAP70-2</shortName>
    </recommendedName>
    <alternativeName>
        <fullName>70 kDa microtubule-associated protein 2</fullName>
    </alternativeName>
</protein>
<organism>
    <name type="scientific">Oryza sativa subsp. japonica</name>
    <name type="common">Rice</name>
    <dbReference type="NCBI Taxonomy" id="39947"/>
    <lineage>
        <taxon>Eukaryota</taxon>
        <taxon>Viridiplantae</taxon>
        <taxon>Streptophyta</taxon>
        <taxon>Embryophyta</taxon>
        <taxon>Tracheophyta</taxon>
        <taxon>Spermatophyta</taxon>
        <taxon>Magnoliopsida</taxon>
        <taxon>Liliopsida</taxon>
        <taxon>Poales</taxon>
        <taxon>Poaceae</taxon>
        <taxon>BOP clade</taxon>
        <taxon>Oryzoideae</taxon>
        <taxon>Oryzeae</taxon>
        <taxon>Oryzinae</taxon>
        <taxon>Oryza</taxon>
        <taxon>Oryza sativa</taxon>
    </lineage>
</organism>
<dbReference type="EMBL" id="AP004880">
    <property type="protein sequence ID" value="BAD15899.1"/>
    <property type="molecule type" value="Genomic_DNA"/>
</dbReference>
<dbReference type="EMBL" id="AP008208">
    <property type="protein sequence ID" value="BAF09964.1"/>
    <property type="molecule type" value="Genomic_DNA"/>
</dbReference>
<dbReference type="EMBL" id="AP014958">
    <property type="protein sequence ID" value="BAS80804.1"/>
    <property type="molecule type" value="Genomic_DNA"/>
</dbReference>
<dbReference type="EMBL" id="AK102381">
    <property type="protein sequence ID" value="BAG95529.1"/>
    <property type="molecule type" value="mRNA"/>
</dbReference>
<dbReference type="RefSeq" id="XP_015622634.1">
    <property type="nucleotide sequence ID" value="XM_015767148.1"/>
</dbReference>
<dbReference type="SMR" id="Q6Z746"/>
<dbReference type="FunCoup" id="Q6Z746">
    <property type="interactions" value="1162"/>
</dbReference>
<dbReference type="STRING" id="39947.Q6Z746"/>
<dbReference type="PaxDb" id="39947-Q6Z746"/>
<dbReference type="EnsemblPlants" id="Os02t0736100-01">
    <property type="protein sequence ID" value="Os02t0736100-01"/>
    <property type="gene ID" value="Os02g0736100"/>
</dbReference>
<dbReference type="Gramene" id="Os02t0736100-01">
    <property type="protein sequence ID" value="Os02t0736100-01"/>
    <property type="gene ID" value="Os02g0736100"/>
</dbReference>
<dbReference type="KEGG" id="dosa:Os02g0736100"/>
<dbReference type="eggNOG" id="ENOG502QTPA">
    <property type="taxonomic scope" value="Eukaryota"/>
</dbReference>
<dbReference type="HOGENOM" id="CLU_023069_0_0_1"/>
<dbReference type="InParanoid" id="Q6Z746"/>
<dbReference type="OMA" id="CEHNSAD"/>
<dbReference type="OrthoDB" id="2014495at2759"/>
<dbReference type="Proteomes" id="UP000000763">
    <property type="component" value="Chromosome 2"/>
</dbReference>
<dbReference type="Proteomes" id="UP000059680">
    <property type="component" value="Chromosome 2"/>
</dbReference>
<dbReference type="GO" id="GO:0005737">
    <property type="term" value="C:cytoplasm"/>
    <property type="evidence" value="ECO:0007669"/>
    <property type="project" value="UniProtKB-KW"/>
</dbReference>
<dbReference type="GO" id="GO:0005874">
    <property type="term" value="C:microtubule"/>
    <property type="evidence" value="ECO:0007669"/>
    <property type="project" value="UniProtKB-KW"/>
</dbReference>
<dbReference type="GO" id="GO:0008017">
    <property type="term" value="F:microtubule binding"/>
    <property type="evidence" value="ECO:0007669"/>
    <property type="project" value="InterPro"/>
</dbReference>
<dbReference type="GO" id="GO:0007010">
    <property type="term" value="P:cytoskeleton organization"/>
    <property type="evidence" value="ECO:0007669"/>
    <property type="project" value="InterPro"/>
</dbReference>
<dbReference type="InterPro" id="IPR009768">
    <property type="entry name" value="MAP70"/>
</dbReference>
<dbReference type="PANTHER" id="PTHR31246">
    <property type="entry name" value="MICROTUBULE-ASSOCIATED PROTEIN 70-2"/>
    <property type="match status" value="1"/>
</dbReference>
<dbReference type="PANTHER" id="PTHR31246:SF17">
    <property type="entry name" value="MICROTUBULE-ASSOCIATED PROTEIN 70-2"/>
    <property type="match status" value="1"/>
</dbReference>
<dbReference type="Pfam" id="PF07058">
    <property type="entry name" value="MAP70"/>
    <property type="match status" value="1"/>
</dbReference>
<keyword id="KW-0175">Coiled coil</keyword>
<keyword id="KW-0963">Cytoplasm</keyword>
<keyword id="KW-0206">Cytoskeleton</keyword>
<keyword id="KW-0493">Microtubule</keyword>
<keyword id="KW-1185">Reference proteome</keyword>